<feature type="chain" id="PRO_0000160519" description="ATP-dependent protease ATPase subunit HslU">
    <location>
        <begin position="1"/>
        <end position="479"/>
    </location>
</feature>
<feature type="binding site" evidence="1">
    <location>
        <position position="32"/>
    </location>
    <ligand>
        <name>ATP</name>
        <dbReference type="ChEBI" id="CHEBI:30616"/>
    </ligand>
</feature>
<feature type="binding site" evidence="1">
    <location>
        <begin position="74"/>
        <end position="79"/>
    </location>
    <ligand>
        <name>ATP</name>
        <dbReference type="ChEBI" id="CHEBI:30616"/>
    </ligand>
</feature>
<feature type="binding site" evidence="1">
    <location>
        <position position="290"/>
    </location>
    <ligand>
        <name>ATP</name>
        <dbReference type="ChEBI" id="CHEBI:30616"/>
    </ligand>
</feature>
<feature type="binding site" evidence="1">
    <location>
        <position position="355"/>
    </location>
    <ligand>
        <name>ATP</name>
        <dbReference type="ChEBI" id="CHEBI:30616"/>
    </ligand>
</feature>
<feature type="binding site" evidence="1">
    <location>
        <position position="427"/>
    </location>
    <ligand>
        <name>ATP</name>
        <dbReference type="ChEBI" id="CHEBI:30616"/>
    </ligand>
</feature>
<proteinExistence type="inferred from homology"/>
<evidence type="ECO:0000255" key="1">
    <source>
        <dbReference type="HAMAP-Rule" id="MF_00249"/>
    </source>
</evidence>
<dbReference type="EMBL" id="AE010300">
    <property type="protein sequence ID" value="AAN49544.1"/>
    <property type="molecule type" value="Genomic_DNA"/>
</dbReference>
<dbReference type="RefSeq" id="NP_712526.1">
    <property type="nucleotide sequence ID" value="NC_004342.2"/>
</dbReference>
<dbReference type="RefSeq" id="WP_001273640.1">
    <property type="nucleotide sequence ID" value="NC_004342.2"/>
</dbReference>
<dbReference type="SMR" id="Q8F3Q5"/>
<dbReference type="FunCoup" id="Q8F3Q5">
    <property type="interactions" value="224"/>
</dbReference>
<dbReference type="STRING" id="189518.LA_2345"/>
<dbReference type="PaxDb" id="189518-LA_2345"/>
<dbReference type="EnsemblBacteria" id="AAN49544">
    <property type="protein sequence ID" value="AAN49544"/>
    <property type="gene ID" value="LA_2345"/>
</dbReference>
<dbReference type="KEGG" id="lil:LA_2345"/>
<dbReference type="PATRIC" id="fig|189518.3.peg.2329"/>
<dbReference type="HOGENOM" id="CLU_033123_0_0_12"/>
<dbReference type="InParanoid" id="Q8F3Q5"/>
<dbReference type="OrthoDB" id="9804062at2"/>
<dbReference type="Proteomes" id="UP000001408">
    <property type="component" value="Chromosome I"/>
</dbReference>
<dbReference type="GO" id="GO:0009376">
    <property type="term" value="C:HslUV protease complex"/>
    <property type="evidence" value="ECO:0000318"/>
    <property type="project" value="GO_Central"/>
</dbReference>
<dbReference type="GO" id="GO:0005524">
    <property type="term" value="F:ATP binding"/>
    <property type="evidence" value="ECO:0000318"/>
    <property type="project" value="GO_Central"/>
</dbReference>
<dbReference type="GO" id="GO:0016887">
    <property type="term" value="F:ATP hydrolysis activity"/>
    <property type="evidence" value="ECO:0000318"/>
    <property type="project" value="GO_Central"/>
</dbReference>
<dbReference type="GO" id="GO:0008233">
    <property type="term" value="F:peptidase activity"/>
    <property type="evidence" value="ECO:0007669"/>
    <property type="project" value="InterPro"/>
</dbReference>
<dbReference type="GO" id="GO:0036402">
    <property type="term" value="F:proteasome-activating activity"/>
    <property type="evidence" value="ECO:0007669"/>
    <property type="project" value="UniProtKB-UniRule"/>
</dbReference>
<dbReference type="GO" id="GO:0043335">
    <property type="term" value="P:protein unfolding"/>
    <property type="evidence" value="ECO:0007669"/>
    <property type="project" value="UniProtKB-UniRule"/>
</dbReference>
<dbReference type="GO" id="GO:0051603">
    <property type="term" value="P:proteolysis involved in protein catabolic process"/>
    <property type="evidence" value="ECO:0000318"/>
    <property type="project" value="GO_Central"/>
</dbReference>
<dbReference type="CDD" id="cd19498">
    <property type="entry name" value="RecA-like_HslU"/>
    <property type="match status" value="1"/>
</dbReference>
<dbReference type="FunFam" id="3.40.50.300:FF:000213">
    <property type="entry name" value="ATP-dependent protease ATPase subunit HslU"/>
    <property type="match status" value="1"/>
</dbReference>
<dbReference type="Gene3D" id="1.10.8.60">
    <property type="match status" value="1"/>
</dbReference>
<dbReference type="Gene3D" id="3.40.50.300">
    <property type="entry name" value="P-loop containing nucleotide triphosphate hydrolases"/>
    <property type="match status" value="2"/>
</dbReference>
<dbReference type="HAMAP" id="MF_00249">
    <property type="entry name" value="HslU"/>
    <property type="match status" value="1"/>
</dbReference>
<dbReference type="InterPro" id="IPR003593">
    <property type="entry name" value="AAA+_ATPase"/>
</dbReference>
<dbReference type="InterPro" id="IPR050052">
    <property type="entry name" value="ATP-dep_Clp_protease_ClpX"/>
</dbReference>
<dbReference type="InterPro" id="IPR003959">
    <property type="entry name" value="ATPase_AAA_core"/>
</dbReference>
<dbReference type="InterPro" id="IPR011704">
    <property type="entry name" value="ATPase_dyneun-rel_AAA"/>
</dbReference>
<dbReference type="InterPro" id="IPR019489">
    <property type="entry name" value="Clp_ATPase_C"/>
</dbReference>
<dbReference type="InterPro" id="IPR004491">
    <property type="entry name" value="HslU"/>
</dbReference>
<dbReference type="InterPro" id="IPR027417">
    <property type="entry name" value="P-loop_NTPase"/>
</dbReference>
<dbReference type="NCBIfam" id="TIGR00390">
    <property type="entry name" value="hslU"/>
    <property type="match status" value="1"/>
</dbReference>
<dbReference type="NCBIfam" id="NF003544">
    <property type="entry name" value="PRK05201.1"/>
    <property type="match status" value="1"/>
</dbReference>
<dbReference type="PANTHER" id="PTHR48102">
    <property type="entry name" value="ATP-DEPENDENT CLP PROTEASE ATP-BINDING SUBUNIT CLPX-LIKE, MITOCHONDRIAL-RELATED"/>
    <property type="match status" value="1"/>
</dbReference>
<dbReference type="PANTHER" id="PTHR48102:SF3">
    <property type="entry name" value="ATP-DEPENDENT PROTEASE ATPASE SUBUNIT HSLU"/>
    <property type="match status" value="1"/>
</dbReference>
<dbReference type="Pfam" id="PF07724">
    <property type="entry name" value="AAA_2"/>
    <property type="match status" value="1"/>
</dbReference>
<dbReference type="Pfam" id="PF07728">
    <property type="entry name" value="AAA_5"/>
    <property type="match status" value="1"/>
</dbReference>
<dbReference type="SMART" id="SM00382">
    <property type="entry name" value="AAA"/>
    <property type="match status" value="1"/>
</dbReference>
<dbReference type="SMART" id="SM01086">
    <property type="entry name" value="ClpB_D2-small"/>
    <property type="match status" value="1"/>
</dbReference>
<dbReference type="SUPFAM" id="SSF52540">
    <property type="entry name" value="P-loop containing nucleoside triphosphate hydrolases"/>
    <property type="match status" value="1"/>
</dbReference>
<sequence>MANHPIDQELTSPAEEELTPREIVAKLDEHIISQKNAKKAVAIALRNRTRRKKLDPEMREEIYPKNIIMIGPTGVGKTEIARRLSKLCGAPFLKVEATKYTEVGYVGRDVESMIRDLAVISMNLVKQEFRTKVEETAKQKAEEALLDILLPFPGENKHGSGQITGFATSSTLADEEDRKTHFLETREFMRKKLKTGKLDDQEVELDLPNPSVSQVPMLQVFGAGNLDDLDNQLQNVLGDILPKKNKKRKLKIPEALKALEESEAEKLLDPDKVQREALRRVEEMGIIFLDEIDKIAGREGKSGADVSREGVQRDLLPIVEGATVNTKIGPVKTDHILFIAAGAFHMTKPSDLIPELQGRFPIRVELEKLSREDFEKILTAPCSSLTRQYEALLSTDGIQLEFSLDGIQEIARIAYDMNEKHENIGARRLNTILERLLEEVSFEGPDLPESQRKVRIDGKYVTDRLQGVIQNKDLSQYIL</sequence>
<gene>
    <name evidence="1" type="primary">hslU</name>
    <name type="ordered locus">LA_2345</name>
</gene>
<accession>Q8F3Q5</accession>
<keyword id="KW-0067">ATP-binding</keyword>
<keyword id="KW-0143">Chaperone</keyword>
<keyword id="KW-0963">Cytoplasm</keyword>
<keyword id="KW-0547">Nucleotide-binding</keyword>
<keyword id="KW-1185">Reference proteome</keyword>
<comment type="function">
    <text evidence="1">ATPase subunit of a proteasome-like degradation complex; this subunit has chaperone activity. The binding of ATP and its subsequent hydrolysis by HslU are essential for unfolding of protein substrates subsequently hydrolyzed by HslV. HslU recognizes the N-terminal part of its protein substrates and unfolds these before they are guided to HslV for hydrolysis.</text>
</comment>
<comment type="subunit">
    <text evidence="1">A double ring-shaped homohexamer of HslV is capped on each side by a ring-shaped HslU homohexamer. The assembly of the HslU/HslV complex is dependent on binding of ATP.</text>
</comment>
<comment type="subcellular location">
    <subcellularLocation>
        <location evidence="1">Cytoplasm</location>
    </subcellularLocation>
</comment>
<comment type="similarity">
    <text evidence="1">Belongs to the ClpX chaperone family. HslU subfamily.</text>
</comment>
<name>HSLU_LEPIN</name>
<reference key="1">
    <citation type="journal article" date="2003" name="Nature">
        <title>Unique physiological and pathogenic features of Leptospira interrogans revealed by whole-genome sequencing.</title>
        <authorList>
            <person name="Ren S.-X."/>
            <person name="Fu G."/>
            <person name="Jiang X.-G."/>
            <person name="Zeng R."/>
            <person name="Miao Y.-G."/>
            <person name="Xu H."/>
            <person name="Zhang Y.-X."/>
            <person name="Xiong H."/>
            <person name="Lu G."/>
            <person name="Lu L.-F."/>
            <person name="Jiang H.-Q."/>
            <person name="Jia J."/>
            <person name="Tu Y.-F."/>
            <person name="Jiang J.-X."/>
            <person name="Gu W.-Y."/>
            <person name="Zhang Y.-Q."/>
            <person name="Cai Z."/>
            <person name="Sheng H.-H."/>
            <person name="Yin H.-F."/>
            <person name="Zhang Y."/>
            <person name="Zhu G.-F."/>
            <person name="Wan M."/>
            <person name="Huang H.-L."/>
            <person name="Qian Z."/>
            <person name="Wang S.-Y."/>
            <person name="Ma W."/>
            <person name="Yao Z.-J."/>
            <person name="Shen Y."/>
            <person name="Qiang B.-Q."/>
            <person name="Xia Q.-C."/>
            <person name="Guo X.-K."/>
            <person name="Danchin A."/>
            <person name="Saint Girons I."/>
            <person name="Somerville R.L."/>
            <person name="Wen Y.-M."/>
            <person name="Shi M.-H."/>
            <person name="Chen Z."/>
            <person name="Xu J.-G."/>
            <person name="Zhao G.-P."/>
        </authorList>
    </citation>
    <scope>NUCLEOTIDE SEQUENCE [LARGE SCALE GENOMIC DNA]</scope>
    <source>
        <strain>56601</strain>
    </source>
</reference>
<organism>
    <name type="scientific">Leptospira interrogans serogroup Icterohaemorrhagiae serovar Lai (strain 56601)</name>
    <dbReference type="NCBI Taxonomy" id="189518"/>
    <lineage>
        <taxon>Bacteria</taxon>
        <taxon>Pseudomonadati</taxon>
        <taxon>Spirochaetota</taxon>
        <taxon>Spirochaetia</taxon>
        <taxon>Leptospirales</taxon>
        <taxon>Leptospiraceae</taxon>
        <taxon>Leptospira</taxon>
    </lineage>
</organism>
<protein>
    <recommendedName>
        <fullName evidence="1">ATP-dependent protease ATPase subunit HslU</fullName>
    </recommendedName>
    <alternativeName>
        <fullName evidence="1">Unfoldase HslU</fullName>
    </alternativeName>
</protein>